<keyword id="KW-0030">Aminoacyl-tRNA synthetase</keyword>
<keyword id="KW-0067">ATP-binding</keyword>
<keyword id="KW-0963">Cytoplasm</keyword>
<keyword id="KW-0436">Ligase</keyword>
<keyword id="KW-0547">Nucleotide-binding</keyword>
<keyword id="KW-0648">Protein biosynthesis</keyword>
<name>SYP_ECOUT</name>
<proteinExistence type="inferred from homology"/>
<comment type="function">
    <text evidence="1">Catalyzes the attachment of proline to tRNA(Pro) in a two-step reaction: proline is first activated by ATP to form Pro-AMP and then transferred to the acceptor end of tRNA(Pro). As ProRS can inadvertently accommodate and process non-cognate amino acids such as alanine and cysteine, to avoid such errors it has two additional distinct editing activities against alanine. One activity is designated as 'pretransfer' editing and involves the tRNA(Pro)-independent hydrolysis of activated Ala-AMP. The other activity is designated 'posttransfer' editing and involves deacylation of mischarged Ala-tRNA(Pro). The misacylated Cys-tRNA(Pro) is not edited by ProRS.</text>
</comment>
<comment type="catalytic activity">
    <reaction evidence="1">
        <text>tRNA(Pro) + L-proline + ATP = L-prolyl-tRNA(Pro) + AMP + diphosphate</text>
        <dbReference type="Rhea" id="RHEA:14305"/>
        <dbReference type="Rhea" id="RHEA-COMP:9700"/>
        <dbReference type="Rhea" id="RHEA-COMP:9702"/>
        <dbReference type="ChEBI" id="CHEBI:30616"/>
        <dbReference type="ChEBI" id="CHEBI:33019"/>
        <dbReference type="ChEBI" id="CHEBI:60039"/>
        <dbReference type="ChEBI" id="CHEBI:78442"/>
        <dbReference type="ChEBI" id="CHEBI:78532"/>
        <dbReference type="ChEBI" id="CHEBI:456215"/>
        <dbReference type="EC" id="6.1.1.15"/>
    </reaction>
</comment>
<comment type="subunit">
    <text evidence="1">Homodimer.</text>
</comment>
<comment type="subcellular location">
    <subcellularLocation>
        <location evidence="1">Cytoplasm</location>
    </subcellularLocation>
</comment>
<comment type="domain">
    <text evidence="1">Consists of three domains: the N-terminal catalytic domain, the editing domain and the C-terminal anticodon-binding domain.</text>
</comment>
<comment type="similarity">
    <text evidence="1">Belongs to the class-II aminoacyl-tRNA synthetase family. ProS type 1 subfamily.</text>
</comment>
<comment type="sequence caution" evidence="2">
    <conflict type="erroneous initiation">
        <sequence resource="EMBL-CDS" id="ABE05720"/>
    </conflict>
</comment>
<reference key="1">
    <citation type="journal article" date="2006" name="Proc. Natl. Acad. Sci. U.S.A.">
        <title>Identification of genes subject to positive selection in uropathogenic strains of Escherichia coli: a comparative genomics approach.</title>
        <authorList>
            <person name="Chen S.L."/>
            <person name="Hung C.-S."/>
            <person name="Xu J."/>
            <person name="Reigstad C.S."/>
            <person name="Magrini V."/>
            <person name="Sabo A."/>
            <person name="Blasiar D."/>
            <person name="Bieri T."/>
            <person name="Meyer R.R."/>
            <person name="Ozersky P."/>
            <person name="Armstrong J.R."/>
            <person name="Fulton R.S."/>
            <person name="Latreille J.P."/>
            <person name="Spieth J."/>
            <person name="Hooton T.M."/>
            <person name="Mardis E.R."/>
            <person name="Hultgren S.J."/>
            <person name="Gordon J.I."/>
        </authorList>
    </citation>
    <scope>NUCLEOTIDE SEQUENCE [LARGE SCALE GENOMIC DNA]</scope>
    <source>
        <strain>UTI89 / UPEC</strain>
    </source>
</reference>
<evidence type="ECO:0000255" key="1">
    <source>
        <dbReference type="HAMAP-Rule" id="MF_01569"/>
    </source>
</evidence>
<evidence type="ECO:0000305" key="2"/>
<sequence>MRTSQYLLSTLKETPADAEVISHQLMLRAGMIRKLASGLYTWLPTGVRVLKKVENIVREEMNNAGAIEVLMPVVQPSELWQESGRWEQYGPELLRIADRGDRPFVLGPTHEEVITDLIRNELSSYKQLPLNFYQIQTKFRDEVRPRFGVMRSREFLMKDAYSFHTSQESLQETYDAMYAAYSKIFSRMGLDFRAVQADTGSIGGSASHEFQVLAQSGEDDVVFSDTSDYAANIELAEAIAPKEPRAAATQEMTLVDTPNAKTIAELVEQFNLPIEKTVKTLLVKAVEGSSFPLVALLVRGDHELNEVKAEKLPQVASPLTFATEEEIRAVVKAGPGSLGPVNMPIPVVIDRTVAAMSDFAAGANIDGKHYFGINWDRDVATPEIADIRNVVAGDPSPDGQGTLLIKRGIEVGHIFQLGTKYSEALKASVQGEDGRNQILTMGCYGIGVTRVVAAAIEQNYDERGIVWPDAIAPFQVAILPMNMHKSFRVQELAEKLYSELRAQGIEVLLDDRKERPGVMFADMELIGIPHTIVLGDRNLDNDDIEYKYRRNGEKQLIKTGDIVDYLVKQIKG</sequence>
<dbReference type="EC" id="6.1.1.15" evidence="1"/>
<dbReference type="EMBL" id="CP000243">
    <property type="protein sequence ID" value="ABE05720.1"/>
    <property type="status" value="ALT_INIT"/>
    <property type="molecule type" value="Genomic_DNA"/>
</dbReference>
<dbReference type="RefSeq" id="WP_001260694.1">
    <property type="nucleotide sequence ID" value="NZ_CP064825.1"/>
</dbReference>
<dbReference type="SMR" id="Q1RFZ4"/>
<dbReference type="KEGG" id="eci:UTI89_C0210"/>
<dbReference type="HOGENOM" id="CLU_016739_0_0_6"/>
<dbReference type="Proteomes" id="UP000001952">
    <property type="component" value="Chromosome"/>
</dbReference>
<dbReference type="GO" id="GO:0005829">
    <property type="term" value="C:cytosol"/>
    <property type="evidence" value="ECO:0007669"/>
    <property type="project" value="TreeGrafter"/>
</dbReference>
<dbReference type="GO" id="GO:0002161">
    <property type="term" value="F:aminoacyl-tRNA deacylase activity"/>
    <property type="evidence" value="ECO:0007669"/>
    <property type="project" value="InterPro"/>
</dbReference>
<dbReference type="GO" id="GO:0005524">
    <property type="term" value="F:ATP binding"/>
    <property type="evidence" value="ECO:0007669"/>
    <property type="project" value="UniProtKB-UniRule"/>
</dbReference>
<dbReference type="GO" id="GO:0004827">
    <property type="term" value="F:proline-tRNA ligase activity"/>
    <property type="evidence" value="ECO:0007669"/>
    <property type="project" value="UniProtKB-UniRule"/>
</dbReference>
<dbReference type="GO" id="GO:0006433">
    <property type="term" value="P:prolyl-tRNA aminoacylation"/>
    <property type="evidence" value="ECO:0007669"/>
    <property type="project" value="UniProtKB-UniRule"/>
</dbReference>
<dbReference type="CDD" id="cd04334">
    <property type="entry name" value="ProRS-INS"/>
    <property type="match status" value="1"/>
</dbReference>
<dbReference type="CDD" id="cd00861">
    <property type="entry name" value="ProRS_anticodon_short"/>
    <property type="match status" value="1"/>
</dbReference>
<dbReference type="CDD" id="cd00779">
    <property type="entry name" value="ProRS_core_prok"/>
    <property type="match status" value="1"/>
</dbReference>
<dbReference type="FunFam" id="3.30.930.10:FF:000043">
    <property type="entry name" value="Proline--tRNA ligase"/>
    <property type="match status" value="1"/>
</dbReference>
<dbReference type="FunFam" id="3.30.930.10:FF:000097">
    <property type="entry name" value="Proline--tRNA ligase"/>
    <property type="match status" value="1"/>
</dbReference>
<dbReference type="FunFam" id="3.40.50.800:FF:000006">
    <property type="entry name" value="Proline--tRNA ligase"/>
    <property type="match status" value="1"/>
</dbReference>
<dbReference type="FunFam" id="3.90.960.10:FF:000001">
    <property type="entry name" value="Proline--tRNA ligase"/>
    <property type="match status" value="1"/>
</dbReference>
<dbReference type="Gene3D" id="3.40.50.800">
    <property type="entry name" value="Anticodon-binding domain"/>
    <property type="match status" value="1"/>
</dbReference>
<dbReference type="Gene3D" id="3.30.930.10">
    <property type="entry name" value="Bira Bifunctional Protein, Domain 2"/>
    <property type="match status" value="2"/>
</dbReference>
<dbReference type="Gene3D" id="3.90.960.10">
    <property type="entry name" value="YbaK/aminoacyl-tRNA synthetase-associated domain"/>
    <property type="match status" value="1"/>
</dbReference>
<dbReference type="HAMAP" id="MF_01569">
    <property type="entry name" value="Pro_tRNA_synth_type1"/>
    <property type="match status" value="1"/>
</dbReference>
<dbReference type="InterPro" id="IPR002314">
    <property type="entry name" value="aa-tRNA-synt_IIb"/>
</dbReference>
<dbReference type="InterPro" id="IPR006195">
    <property type="entry name" value="aa-tRNA-synth_II"/>
</dbReference>
<dbReference type="InterPro" id="IPR045864">
    <property type="entry name" value="aa-tRNA-synth_II/BPL/LPL"/>
</dbReference>
<dbReference type="InterPro" id="IPR004154">
    <property type="entry name" value="Anticodon-bd"/>
</dbReference>
<dbReference type="InterPro" id="IPR036621">
    <property type="entry name" value="Anticodon-bd_dom_sf"/>
</dbReference>
<dbReference type="InterPro" id="IPR002316">
    <property type="entry name" value="Pro-tRNA-ligase_IIa"/>
</dbReference>
<dbReference type="InterPro" id="IPR004500">
    <property type="entry name" value="Pro-tRNA-synth_IIa_bac-type"/>
</dbReference>
<dbReference type="InterPro" id="IPR023717">
    <property type="entry name" value="Pro-tRNA-Synthase_IIa_type1"/>
</dbReference>
<dbReference type="InterPro" id="IPR050062">
    <property type="entry name" value="Pro-tRNA_synthetase"/>
</dbReference>
<dbReference type="InterPro" id="IPR044140">
    <property type="entry name" value="ProRS_anticodon_short"/>
</dbReference>
<dbReference type="InterPro" id="IPR033730">
    <property type="entry name" value="ProRS_core_prok"/>
</dbReference>
<dbReference type="InterPro" id="IPR036754">
    <property type="entry name" value="YbaK/aa-tRNA-synt-asso_dom_sf"/>
</dbReference>
<dbReference type="InterPro" id="IPR007214">
    <property type="entry name" value="YbaK/aa-tRNA-synth-assoc-dom"/>
</dbReference>
<dbReference type="NCBIfam" id="NF006625">
    <property type="entry name" value="PRK09194.1"/>
    <property type="match status" value="1"/>
</dbReference>
<dbReference type="NCBIfam" id="TIGR00409">
    <property type="entry name" value="proS_fam_II"/>
    <property type="match status" value="1"/>
</dbReference>
<dbReference type="PANTHER" id="PTHR42753">
    <property type="entry name" value="MITOCHONDRIAL RIBOSOME PROTEIN L39/PROLYL-TRNA LIGASE FAMILY MEMBER"/>
    <property type="match status" value="1"/>
</dbReference>
<dbReference type="PANTHER" id="PTHR42753:SF2">
    <property type="entry name" value="PROLINE--TRNA LIGASE"/>
    <property type="match status" value="1"/>
</dbReference>
<dbReference type="Pfam" id="PF03129">
    <property type="entry name" value="HGTP_anticodon"/>
    <property type="match status" value="1"/>
</dbReference>
<dbReference type="Pfam" id="PF00587">
    <property type="entry name" value="tRNA-synt_2b"/>
    <property type="match status" value="1"/>
</dbReference>
<dbReference type="Pfam" id="PF04073">
    <property type="entry name" value="tRNA_edit"/>
    <property type="match status" value="1"/>
</dbReference>
<dbReference type="PIRSF" id="PIRSF001535">
    <property type="entry name" value="ProRS_1"/>
    <property type="match status" value="1"/>
</dbReference>
<dbReference type="PRINTS" id="PR01046">
    <property type="entry name" value="TRNASYNTHPRO"/>
</dbReference>
<dbReference type="SUPFAM" id="SSF52954">
    <property type="entry name" value="Class II aaRS ABD-related"/>
    <property type="match status" value="1"/>
</dbReference>
<dbReference type="SUPFAM" id="SSF55681">
    <property type="entry name" value="Class II aaRS and biotin synthetases"/>
    <property type="match status" value="1"/>
</dbReference>
<dbReference type="SUPFAM" id="SSF55826">
    <property type="entry name" value="YbaK/ProRS associated domain"/>
    <property type="match status" value="1"/>
</dbReference>
<dbReference type="PROSITE" id="PS50862">
    <property type="entry name" value="AA_TRNA_LIGASE_II"/>
    <property type="match status" value="1"/>
</dbReference>
<protein>
    <recommendedName>
        <fullName evidence="1">Proline--tRNA ligase</fullName>
        <ecNumber evidence="1">6.1.1.15</ecNumber>
    </recommendedName>
    <alternativeName>
        <fullName evidence="1">Prolyl-tRNA synthetase</fullName>
        <shortName evidence="1">ProRS</shortName>
    </alternativeName>
</protein>
<accession>Q1RFZ4</accession>
<organism>
    <name type="scientific">Escherichia coli (strain UTI89 / UPEC)</name>
    <dbReference type="NCBI Taxonomy" id="364106"/>
    <lineage>
        <taxon>Bacteria</taxon>
        <taxon>Pseudomonadati</taxon>
        <taxon>Pseudomonadota</taxon>
        <taxon>Gammaproteobacteria</taxon>
        <taxon>Enterobacterales</taxon>
        <taxon>Enterobacteriaceae</taxon>
        <taxon>Escherichia</taxon>
    </lineage>
</organism>
<feature type="chain" id="PRO_0000248690" description="Proline--tRNA ligase">
    <location>
        <begin position="1"/>
        <end position="572"/>
    </location>
</feature>
<gene>
    <name evidence="1" type="primary">proS</name>
    <name type="ordered locus">UTI89_C0210</name>
</gene>